<dbReference type="EC" id="7.1.1.-"/>
<dbReference type="EMBL" id="AJ235273">
    <property type="protein sequence ID" value="CAA15223.1"/>
    <property type="molecule type" value="Genomic_DNA"/>
</dbReference>
<dbReference type="PIR" id="G71640">
    <property type="entry name" value="G71640"/>
</dbReference>
<dbReference type="RefSeq" id="NP_221147.1">
    <property type="nucleotide sequence ID" value="NC_000963.1"/>
</dbReference>
<dbReference type="RefSeq" id="WP_004599656.1">
    <property type="nucleotide sequence ID" value="NC_000963.1"/>
</dbReference>
<dbReference type="SMR" id="Q9ZCF6"/>
<dbReference type="STRING" id="272947.gene:17555866"/>
<dbReference type="EnsemblBacteria" id="CAA15223">
    <property type="protein sequence ID" value="CAA15223"/>
    <property type="gene ID" value="CAA15223"/>
</dbReference>
<dbReference type="GeneID" id="57569919"/>
<dbReference type="KEGG" id="rpr:RP797"/>
<dbReference type="PATRIC" id="fig|272947.5.peg.833"/>
<dbReference type="eggNOG" id="COG1034">
    <property type="taxonomic scope" value="Bacteria"/>
</dbReference>
<dbReference type="HOGENOM" id="CLU_000422_11_6_5"/>
<dbReference type="OrthoDB" id="9803192at2"/>
<dbReference type="Proteomes" id="UP000002480">
    <property type="component" value="Chromosome"/>
</dbReference>
<dbReference type="GO" id="GO:0016020">
    <property type="term" value="C:membrane"/>
    <property type="evidence" value="ECO:0007669"/>
    <property type="project" value="InterPro"/>
</dbReference>
<dbReference type="GO" id="GO:0051537">
    <property type="term" value="F:2 iron, 2 sulfur cluster binding"/>
    <property type="evidence" value="ECO:0007669"/>
    <property type="project" value="UniProtKB-KW"/>
</dbReference>
<dbReference type="GO" id="GO:0051539">
    <property type="term" value="F:4 iron, 4 sulfur cluster binding"/>
    <property type="evidence" value="ECO:0007669"/>
    <property type="project" value="UniProtKB-KW"/>
</dbReference>
<dbReference type="GO" id="GO:0046872">
    <property type="term" value="F:metal ion binding"/>
    <property type="evidence" value="ECO:0007669"/>
    <property type="project" value="UniProtKB-KW"/>
</dbReference>
<dbReference type="GO" id="GO:0008137">
    <property type="term" value="F:NADH dehydrogenase (ubiquinone) activity"/>
    <property type="evidence" value="ECO:0007669"/>
    <property type="project" value="InterPro"/>
</dbReference>
<dbReference type="GO" id="GO:0048038">
    <property type="term" value="F:quinone binding"/>
    <property type="evidence" value="ECO:0007669"/>
    <property type="project" value="UniProtKB-KW"/>
</dbReference>
<dbReference type="GO" id="GO:0042773">
    <property type="term" value="P:ATP synthesis coupled electron transport"/>
    <property type="evidence" value="ECO:0007669"/>
    <property type="project" value="InterPro"/>
</dbReference>
<dbReference type="CDD" id="cd00207">
    <property type="entry name" value="fer2"/>
    <property type="match status" value="1"/>
</dbReference>
<dbReference type="CDD" id="cd02773">
    <property type="entry name" value="MopB_Res-Cmplx1_Nad11"/>
    <property type="match status" value="1"/>
</dbReference>
<dbReference type="FunFam" id="3.10.20.740:FF:000001">
    <property type="entry name" value="NADH-quinone oxidoreductase subunit G"/>
    <property type="match status" value="1"/>
</dbReference>
<dbReference type="FunFam" id="3.30.200.210:FF:000002">
    <property type="entry name" value="NADH-ubiquinone oxidoreductase 75 kDa subunit"/>
    <property type="match status" value="1"/>
</dbReference>
<dbReference type="FunFam" id="3.30.70.20:FF:000002">
    <property type="entry name" value="NADH-ubiquinone oxidoreductase 75 kDa subunit"/>
    <property type="match status" value="1"/>
</dbReference>
<dbReference type="Gene3D" id="3.10.20.740">
    <property type="match status" value="1"/>
</dbReference>
<dbReference type="Gene3D" id="3.30.200.210">
    <property type="match status" value="1"/>
</dbReference>
<dbReference type="Gene3D" id="3.30.70.20">
    <property type="match status" value="1"/>
</dbReference>
<dbReference type="Gene3D" id="3.40.50.740">
    <property type="match status" value="1"/>
</dbReference>
<dbReference type="InterPro" id="IPR036010">
    <property type="entry name" value="2Fe-2S_ferredoxin-like_sf"/>
</dbReference>
<dbReference type="InterPro" id="IPR001041">
    <property type="entry name" value="2Fe-2S_ferredoxin-type"/>
</dbReference>
<dbReference type="InterPro" id="IPR006656">
    <property type="entry name" value="Mopterin_OxRdtase"/>
</dbReference>
<dbReference type="InterPro" id="IPR006963">
    <property type="entry name" value="Mopterin_OxRdtase_4Fe-4S_dom"/>
</dbReference>
<dbReference type="InterPro" id="IPR000283">
    <property type="entry name" value="NADH_UbQ_OxRdtase_75kDa_su_CS"/>
</dbReference>
<dbReference type="InterPro" id="IPR054351">
    <property type="entry name" value="NADH_UbQ_OxRdtase_ferredoxin"/>
</dbReference>
<dbReference type="InterPro" id="IPR010228">
    <property type="entry name" value="NADH_UbQ_OxRdtase_Gsu"/>
</dbReference>
<dbReference type="InterPro" id="IPR019574">
    <property type="entry name" value="NADH_UbQ_OxRdtase_Gsu_4Fe4S-bd"/>
</dbReference>
<dbReference type="InterPro" id="IPR015405">
    <property type="entry name" value="NDUFS1-like_C"/>
</dbReference>
<dbReference type="InterPro" id="IPR050123">
    <property type="entry name" value="Prok_molybdopt-oxidoreductase"/>
</dbReference>
<dbReference type="NCBIfam" id="TIGR01973">
    <property type="entry name" value="NuoG"/>
    <property type="match status" value="1"/>
</dbReference>
<dbReference type="PANTHER" id="PTHR43105:SF13">
    <property type="entry name" value="NADH-UBIQUINONE OXIDOREDUCTASE 75 KDA SUBUNIT, MITOCHONDRIAL"/>
    <property type="match status" value="1"/>
</dbReference>
<dbReference type="PANTHER" id="PTHR43105">
    <property type="entry name" value="RESPIRATORY NITRATE REDUCTASE"/>
    <property type="match status" value="1"/>
</dbReference>
<dbReference type="Pfam" id="PF13510">
    <property type="entry name" value="Fer2_4"/>
    <property type="match status" value="1"/>
</dbReference>
<dbReference type="Pfam" id="PF22151">
    <property type="entry name" value="Fer4_NDSU1"/>
    <property type="match status" value="1"/>
</dbReference>
<dbReference type="Pfam" id="PF22117">
    <property type="entry name" value="Fer4_Nqo3"/>
    <property type="match status" value="1"/>
</dbReference>
<dbReference type="Pfam" id="PF00384">
    <property type="entry name" value="Molybdopterin"/>
    <property type="match status" value="1"/>
</dbReference>
<dbReference type="Pfam" id="PF10588">
    <property type="entry name" value="NADH-G_4Fe-4S_3"/>
    <property type="match status" value="1"/>
</dbReference>
<dbReference type="Pfam" id="PF09326">
    <property type="entry name" value="NADH_dhqG_C"/>
    <property type="match status" value="1"/>
</dbReference>
<dbReference type="SMART" id="SM00929">
    <property type="entry name" value="NADH-G_4Fe-4S_3"/>
    <property type="match status" value="1"/>
</dbReference>
<dbReference type="SUPFAM" id="SSF54292">
    <property type="entry name" value="2Fe-2S ferredoxin-like"/>
    <property type="match status" value="1"/>
</dbReference>
<dbReference type="SUPFAM" id="SSF54862">
    <property type="entry name" value="4Fe-4S ferredoxins"/>
    <property type="match status" value="1"/>
</dbReference>
<dbReference type="SUPFAM" id="SSF53706">
    <property type="entry name" value="Formate dehydrogenase/DMSO reductase, domains 1-3"/>
    <property type="match status" value="1"/>
</dbReference>
<dbReference type="PROSITE" id="PS51085">
    <property type="entry name" value="2FE2S_FER_2"/>
    <property type="match status" value="1"/>
</dbReference>
<dbReference type="PROSITE" id="PS51839">
    <property type="entry name" value="4FE4S_HC3"/>
    <property type="match status" value="1"/>
</dbReference>
<dbReference type="PROSITE" id="PS51669">
    <property type="entry name" value="4FE4S_MOW_BIS_MGD"/>
    <property type="match status" value="1"/>
</dbReference>
<dbReference type="PROSITE" id="PS00641">
    <property type="entry name" value="COMPLEX1_75K_1"/>
    <property type="match status" value="1"/>
</dbReference>
<dbReference type="PROSITE" id="PS00642">
    <property type="entry name" value="COMPLEX1_75K_2"/>
    <property type="match status" value="1"/>
</dbReference>
<dbReference type="PROSITE" id="PS00643">
    <property type="entry name" value="COMPLEX1_75K_3"/>
    <property type="match status" value="1"/>
</dbReference>
<proteinExistence type="inferred from homology"/>
<gene>
    <name type="primary">nuoG</name>
    <name type="ordered locus">RP797</name>
</gene>
<sequence length="675" mass="75600">MIKLIIDGSEIEISEGSTVYQACIQAGKEIPHFCYHARLKIAGNCRMCLVEIEKSQKPVASCAMPVSKGMVIHTDTPMVKKAREGVMEFLLINHPLDCPICDQGGECDLQDQAFRYGKGTNRFHENKRSIKDKYMGPLIKTAMTRCIQCTRCIRLANDIAGIEEIGAINRGEHMEVTSYLEQTLDSEISGNMIDICPVGALNSKPYAFKARKWELKHTASIGVHDAEGSNIRIDSRADEIMRILPRVNEAINEEWLSDKNRFCYDGLKYQRLDHPYIRKNGKLVEVSWSEAFKTIMDKIKSVKPEKIAAIAGSIVSVEAMFMLKILLQKLGSNNYTVNQFNYKIDTSERGNYLFNTTIVGVEKADLCLLIGANTRQIAPILNSRIGRRVRIGALKVVRIGIGHNQTYKIQDLGNDIKIIEDLAIGTHEYTKAFKEAKYPMIIVGDGVYGRDDGYAVLSLIHKVVDKYNMMRDDWQGFNILHNHASIVGGLDIGFNTTIKFEGIKLAYLLGADAIPFDKLKSAFIIYQGHHGDVGAMSADVILPAAAYTEQSGIYVNLEGRPQIAQKAVSTVGGAKEDIEIIKEIAGYLKIDIGMDNLQEVRIRLAKEYNVFANIDKITVNKFTKFISIDKLSKDPIAARPINYYMTDVISKNSVTMAKCVEAHEERKRDVAKVFY</sequence>
<feature type="chain" id="PRO_0000118562" description="NADH-quinone oxidoreductase subunit G">
    <location>
        <begin position="1"/>
        <end position="675"/>
    </location>
</feature>
<feature type="domain" description="2Fe-2S ferredoxin-type" evidence="2">
    <location>
        <begin position="1"/>
        <end position="78"/>
    </location>
</feature>
<feature type="domain" description="4Fe-4S His(Cys)3-ligated-type" evidence="4">
    <location>
        <begin position="78"/>
        <end position="117"/>
    </location>
</feature>
<feature type="domain" description="4Fe-4S Mo/W bis-MGD-type" evidence="3">
    <location>
        <begin position="215"/>
        <end position="271"/>
    </location>
</feature>
<feature type="binding site" evidence="1">
    <location>
        <position position="34"/>
    </location>
    <ligand>
        <name>[2Fe-2S] cluster</name>
        <dbReference type="ChEBI" id="CHEBI:190135"/>
    </ligand>
</feature>
<feature type="binding site" evidence="1">
    <location>
        <position position="45"/>
    </location>
    <ligand>
        <name>[2Fe-2S] cluster</name>
        <dbReference type="ChEBI" id="CHEBI:190135"/>
    </ligand>
</feature>
<feature type="binding site" evidence="1">
    <location>
        <position position="48"/>
    </location>
    <ligand>
        <name>[2Fe-2S] cluster</name>
        <dbReference type="ChEBI" id="CHEBI:190135"/>
    </ligand>
</feature>
<feature type="binding site" evidence="1">
    <location>
        <position position="62"/>
    </location>
    <ligand>
        <name>[2Fe-2S] cluster</name>
        <dbReference type="ChEBI" id="CHEBI:190135"/>
    </ligand>
</feature>
<feature type="binding site" evidence="4">
    <location>
        <position position="94"/>
    </location>
    <ligand>
        <name>[4Fe-4S] cluster</name>
        <dbReference type="ChEBI" id="CHEBI:49883"/>
        <label>1</label>
    </ligand>
</feature>
<feature type="binding site" evidence="4">
    <location>
        <position position="98"/>
    </location>
    <ligand>
        <name>[4Fe-4S] cluster</name>
        <dbReference type="ChEBI" id="CHEBI:49883"/>
        <label>1</label>
    </ligand>
</feature>
<feature type="binding site" evidence="4">
    <location>
        <position position="101"/>
    </location>
    <ligand>
        <name>[4Fe-4S] cluster</name>
        <dbReference type="ChEBI" id="CHEBI:49883"/>
        <label>1</label>
    </ligand>
</feature>
<feature type="binding site" evidence="4">
    <location>
        <position position="107"/>
    </location>
    <ligand>
        <name>[4Fe-4S] cluster</name>
        <dbReference type="ChEBI" id="CHEBI:49883"/>
        <label>1</label>
    </ligand>
</feature>
<feature type="binding site" evidence="1">
    <location>
        <position position="146"/>
    </location>
    <ligand>
        <name>[4Fe-4S] cluster</name>
        <dbReference type="ChEBI" id="CHEBI:49883"/>
        <label>2</label>
    </ligand>
</feature>
<feature type="binding site" evidence="1">
    <location>
        <position position="149"/>
    </location>
    <ligand>
        <name>[4Fe-4S] cluster</name>
        <dbReference type="ChEBI" id="CHEBI:49883"/>
        <label>2</label>
    </ligand>
</feature>
<feature type="binding site" evidence="1">
    <location>
        <position position="152"/>
    </location>
    <ligand>
        <name>[4Fe-4S] cluster</name>
        <dbReference type="ChEBI" id="CHEBI:49883"/>
        <label>2</label>
    </ligand>
</feature>
<feature type="binding site" evidence="1">
    <location>
        <position position="196"/>
    </location>
    <ligand>
        <name>[4Fe-4S] cluster</name>
        <dbReference type="ChEBI" id="CHEBI:49883"/>
        <label>2</label>
    </ligand>
</feature>
<evidence type="ECO:0000250" key="1"/>
<evidence type="ECO:0000255" key="2">
    <source>
        <dbReference type="PROSITE-ProRule" id="PRU00465"/>
    </source>
</evidence>
<evidence type="ECO:0000255" key="3">
    <source>
        <dbReference type="PROSITE-ProRule" id="PRU01004"/>
    </source>
</evidence>
<evidence type="ECO:0000255" key="4">
    <source>
        <dbReference type="PROSITE-ProRule" id="PRU01184"/>
    </source>
</evidence>
<evidence type="ECO:0000305" key="5"/>
<comment type="function">
    <text evidence="1">NDH-1 shuttles electrons from NADH, via FMN and iron-sulfur (Fe-S) centers, to quinones in the respiratory chain. Couples the redox reaction to proton translocation (for every two electrons transferred, four hydrogen ions are translocated across the cytoplasmic membrane), and thus conserves the redox energy in a proton gradient (By similarity).</text>
</comment>
<comment type="catalytic activity">
    <reaction>
        <text>a quinone + NADH + 5 H(+)(in) = a quinol + NAD(+) + 4 H(+)(out)</text>
        <dbReference type="Rhea" id="RHEA:57888"/>
        <dbReference type="ChEBI" id="CHEBI:15378"/>
        <dbReference type="ChEBI" id="CHEBI:24646"/>
        <dbReference type="ChEBI" id="CHEBI:57540"/>
        <dbReference type="ChEBI" id="CHEBI:57945"/>
        <dbReference type="ChEBI" id="CHEBI:132124"/>
    </reaction>
</comment>
<comment type="cofactor">
    <cofactor evidence="1">
        <name>[2Fe-2S] cluster</name>
        <dbReference type="ChEBI" id="CHEBI:190135"/>
    </cofactor>
    <text evidence="1">Binds 1 [2Fe-2S] cluster per subunit.</text>
</comment>
<comment type="cofactor">
    <cofactor evidence="1">
        <name>[4Fe-4S] cluster</name>
        <dbReference type="ChEBI" id="CHEBI:49883"/>
    </cofactor>
    <text evidence="1">Binds 2 [4Fe-4S] clusters per subunit.</text>
</comment>
<comment type="similarity">
    <text evidence="5">Belongs to the complex I 75 kDa subunit family.</text>
</comment>
<accession>Q9ZCF6</accession>
<name>NUOG_RICPR</name>
<reference key="1">
    <citation type="journal article" date="1998" name="Nature">
        <title>The genome sequence of Rickettsia prowazekii and the origin of mitochondria.</title>
        <authorList>
            <person name="Andersson S.G.E."/>
            <person name="Zomorodipour A."/>
            <person name="Andersson J.O."/>
            <person name="Sicheritz-Ponten T."/>
            <person name="Alsmark U.C.M."/>
            <person name="Podowski R.M."/>
            <person name="Naeslund A.K."/>
            <person name="Eriksson A.-S."/>
            <person name="Winkler H.H."/>
            <person name="Kurland C.G."/>
        </authorList>
    </citation>
    <scope>NUCLEOTIDE SEQUENCE [LARGE SCALE GENOMIC DNA]</scope>
    <source>
        <strain>Madrid E</strain>
    </source>
</reference>
<protein>
    <recommendedName>
        <fullName>NADH-quinone oxidoreductase subunit G</fullName>
        <ecNumber>7.1.1.-</ecNumber>
    </recommendedName>
    <alternativeName>
        <fullName>NADH dehydrogenase I subunit G</fullName>
    </alternativeName>
    <alternativeName>
        <fullName>NDH-1 subunit G</fullName>
    </alternativeName>
</protein>
<keyword id="KW-0001">2Fe-2S</keyword>
<keyword id="KW-0004">4Fe-4S</keyword>
<keyword id="KW-0408">Iron</keyword>
<keyword id="KW-0411">Iron-sulfur</keyword>
<keyword id="KW-0479">Metal-binding</keyword>
<keyword id="KW-0520">NAD</keyword>
<keyword id="KW-0874">Quinone</keyword>
<keyword id="KW-1185">Reference proteome</keyword>
<keyword id="KW-1278">Translocase</keyword>
<organism>
    <name type="scientific">Rickettsia prowazekii (strain Madrid E)</name>
    <dbReference type="NCBI Taxonomy" id="272947"/>
    <lineage>
        <taxon>Bacteria</taxon>
        <taxon>Pseudomonadati</taxon>
        <taxon>Pseudomonadota</taxon>
        <taxon>Alphaproteobacteria</taxon>
        <taxon>Rickettsiales</taxon>
        <taxon>Rickettsiaceae</taxon>
        <taxon>Rickettsieae</taxon>
        <taxon>Rickettsia</taxon>
        <taxon>typhus group</taxon>
    </lineage>
</organism>